<comment type="function">
    <text evidence="1">Succinyl-CoA synthetase functions in the citric acid cycle (TCA), coupling the hydrolysis of succinyl-CoA to the synthesis of either ATP or GTP and thus represents the only step of substrate-level phosphorylation in the TCA. The beta subunit provides nucleotide specificity of the enzyme and binds the substrate succinate, while the binding sites for coenzyme A and phosphate are found in the alpha subunit.</text>
</comment>
<comment type="catalytic activity">
    <reaction evidence="1">
        <text>succinate + ATP + CoA = succinyl-CoA + ADP + phosphate</text>
        <dbReference type="Rhea" id="RHEA:17661"/>
        <dbReference type="ChEBI" id="CHEBI:30031"/>
        <dbReference type="ChEBI" id="CHEBI:30616"/>
        <dbReference type="ChEBI" id="CHEBI:43474"/>
        <dbReference type="ChEBI" id="CHEBI:57287"/>
        <dbReference type="ChEBI" id="CHEBI:57292"/>
        <dbReference type="ChEBI" id="CHEBI:456216"/>
        <dbReference type="EC" id="6.2.1.5"/>
    </reaction>
    <physiologicalReaction direction="right-to-left" evidence="1">
        <dbReference type="Rhea" id="RHEA:17663"/>
    </physiologicalReaction>
</comment>
<comment type="catalytic activity">
    <reaction evidence="1">
        <text>GTP + succinate + CoA = succinyl-CoA + GDP + phosphate</text>
        <dbReference type="Rhea" id="RHEA:22120"/>
        <dbReference type="ChEBI" id="CHEBI:30031"/>
        <dbReference type="ChEBI" id="CHEBI:37565"/>
        <dbReference type="ChEBI" id="CHEBI:43474"/>
        <dbReference type="ChEBI" id="CHEBI:57287"/>
        <dbReference type="ChEBI" id="CHEBI:57292"/>
        <dbReference type="ChEBI" id="CHEBI:58189"/>
    </reaction>
    <physiologicalReaction direction="right-to-left" evidence="1">
        <dbReference type="Rhea" id="RHEA:22122"/>
    </physiologicalReaction>
</comment>
<comment type="cofactor">
    <cofactor evidence="1">
        <name>Mg(2+)</name>
        <dbReference type="ChEBI" id="CHEBI:18420"/>
    </cofactor>
    <text evidence="1">Binds 1 Mg(2+) ion per subunit.</text>
</comment>
<comment type="pathway">
    <text evidence="1">Carbohydrate metabolism; tricarboxylic acid cycle; succinate from succinyl-CoA (ligase route): step 1/1.</text>
</comment>
<comment type="subunit">
    <text evidence="1">Heterotetramer of two alpha and two beta subunits.</text>
</comment>
<comment type="similarity">
    <text evidence="1">Belongs to the succinate/malate CoA ligase beta subunit family.</text>
</comment>
<accession>Q0KE75</accession>
<name>SUCC_CUPNH</name>
<reference key="1">
    <citation type="journal article" date="2006" name="Nat. Biotechnol.">
        <title>Genome sequence of the bioplastic-producing 'Knallgas' bacterium Ralstonia eutropha H16.</title>
        <authorList>
            <person name="Pohlmann A."/>
            <person name="Fricke W.F."/>
            <person name="Reinecke F."/>
            <person name="Kusian B."/>
            <person name="Liesegang H."/>
            <person name="Cramm R."/>
            <person name="Eitinger T."/>
            <person name="Ewering C."/>
            <person name="Poetter M."/>
            <person name="Schwartz E."/>
            <person name="Strittmatter A."/>
            <person name="Voss I."/>
            <person name="Gottschalk G."/>
            <person name="Steinbuechel A."/>
            <person name="Friedrich B."/>
            <person name="Bowien B."/>
        </authorList>
    </citation>
    <scope>NUCLEOTIDE SEQUENCE [LARGE SCALE GENOMIC DNA]</scope>
    <source>
        <strain>ATCC 17699 / DSM 428 / KCTC 22496 / NCIMB 10442 / H16 / Stanier 337</strain>
    </source>
</reference>
<gene>
    <name evidence="1" type="primary">sucC</name>
    <name type="ordered locus">H16_A0547</name>
</gene>
<dbReference type="EC" id="6.2.1.5" evidence="1"/>
<dbReference type="EMBL" id="AM260479">
    <property type="protein sequence ID" value="CAJ91696.1"/>
    <property type="molecule type" value="Genomic_DNA"/>
</dbReference>
<dbReference type="RefSeq" id="WP_010812219.1">
    <property type="nucleotide sequence ID" value="NZ_CP039287.1"/>
</dbReference>
<dbReference type="SMR" id="Q0KE75"/>
<dbReference type="STRING" id="381666.H16_A0547"/>
<dbReference type="KEGG" id="reh:H16_A0547"/>
<dbReference type="eggNOG" id="COG0045">
    <property type="taxonomic scope" value="Bacteria"/>
</dbReference>
<dbReference type="HOGENOM" id="CLU_037430_0_2_4"/>
<dbReference type="OrthoDB" id="9802602at2"/>
<dbReference type="UniPathway" id="UPA00223">
    <property type="reaction ID" value="UER00999"/>
</dbReference>
<dbReference type="Proteomes" id="UP000008210">
    <property type="component" value="Chromosome 1"/>
</dbReference>
<dbReference type="GO" id="GO:0005829">
    <property type="term" value="C:cytosol"/>
    <property type="evidence" value="ECO:0007669"/>
    <property type="project" value="TreeGrafter"/>
</dbReference>
<dbReference type="GO" id="GO:0042709">
    <property type="term" value="C:succinate-CoA ligase complex"/>
    <property type="evidence" value="ECO:0007669"/>
    <property type="project" value="TreeGrafter"/>
</dbReference>
<dbReference type="GO" id="GO:0005524">
    <property type="term" value="F:ATP binding"/>
    <property type="evidence" value="ECO:0007669"/>
    <property type="project" value="UniProtKB-UniRule"/>
</dbReference>
<dbReference type="GO" id="GO:0000287">
    <property type="term" value="F:magnesium ion binding"/>
    <property type="evidence" value="ECO:0007669"/>
    <property type="project" value="UniProtKB-UniRule"/>
</dbReference>
<dbReference type="GO" id="GO:0004775">
    <property type="term" value="F:succinate-CoA ligase (ADP-forming) activity"/>
    <property type="evidence" value="ECO:0007669"/>
    <property type="project" value="UniProtKB-UniRule"/>
</dbReference>
<dbReference type="GO" id="GO:0004776">
    <property type="term" value="F:succinate-CoA ligase (GDP-forming) activity"/>
    <property type="evidence" value="ECO:0007669"/>
    <property type="project" value="RHEA"/>
</dbReference>
<dbReference type="GO" id="GO:0006104">
    <property type="term" value="P:succinyl-CoA metabolic process"/>
    <property type="evidence" value="ECO:0007669"/>
    <property type="project" value="TreeGrafter"/>
</dbReference>
<dbReference type="GO" id="GO:0006099">
    <property type="term" value="P:tricarboxylic acid cycle"/>
    <property type="evidence" value="ECO:0007669"/>
    <property type="project" value="UniProtKB-UniRule"/>
</dbReference>
<dbReference type="FunFam" id="3.30.1490.20:FF:000002">
    <property type="entry name" value="Succinate--CoA ligase [ADP-forming] subunit beta"/>
    <property type="match status" value="1"/>
</dbReference>
<dbReference type="FunFam" id="3.30.470.20:FF:000002">
    <property type="entry name" value="Succinate--CoA ligase [ADP-forming] subunit beta"/>
    <property type="match status" value="1"/>
</dbReference>
<dbReference type="FunFam" id="3.40.50.261:FF:000001">
    <property type="entry name" value="Succinate--CoA ligase [ADP-forming] subunit beta"/>
    <property type="match status" value="1"/>
</dbReference>
<dbReference type="Gene3D" id="3.30.1490.20">
    <property type="entry name" value="ATP-grasp fold, A domain"/>
    <property type="match status" value="1"/>
</dbReference>
<dbReference type="Gene3D" id="3.30.470.20">
    <property type="entry name" value="ATP-grasp fold, B domain"/>
    <property type="match status" value="1"/>
</dbReference>
<dbReference type="Gene3D" id="3.40.50.261">
    <property type="entry name" value="Succinyl-CoA synthetase domains"/>
    <property type="match status" value="1"/>
</dbReference>
<dbReference type="HAMAP" id="MF_00558">
    <property type="entry name" value="Succ_CoA_beta"/>
    <property type="match status" value="1"/>
</dbReference>
<dbReference type="InterPro" id="IPR011761">
    <property type="entry name" value="ATP-grasp"/>
</dbReference>
<dbReference type="InterPro" id="IPR013650">
    <property type="entry name" value="ATP-grasp_succ-CoA_synth-type"/>
</dbReference>
<dbReference type="InterPro" id="IPR013815">
    <property type="entry name" value="ATP_grasp_subdomain_1"/>
</dbReference>
<dbReference type="InterPro" id="IPR017866">
    <property type="entry name" value="Succ-CoA_synthase_bsu_CS"/>
</dbReference>
<dbReference type="InterPro" id="IPR005811">
    <property type="entry name" value="SUCC_ACL_C"/>
</dbReference>
<dbReference type="InterPro" id="IPR005809">
    <property type="entry name" value="Succ_CoA_ligase-like_bsu"/>
</dbReference>
<dbReference type="InterPro" id="IPR016102">
    <property type="entry name" value="Succinyl-CoA_synth-like"/>
</dbReference>
<dbReference type="NCBIfam" id="NF001913">
    <property type="entry name" value="PRK00696.1"/>
    <property type="match status" value="1"/>
</dbReference>
<dbReference type="NCBIfam" id="TIGR01016">
    <property type="entry name" value="sucCoAbeta"/>
    <property type="match status" value="1"/>
</dbReference>
<dbReference type="PANTHER" id="PTHR11815:SF10">
    <property type="entry name" value="SUCCINATE--COA LIGASE [GDP-FORMING] SUBUNIT BETA, MITOCHONDRIAL"/>
    <property type="match status" value="1"/>
</dbReference>
<dbReference type="PANTHER" id="PTHR11815">
    <property type="entry name" value="SUCCINYL-COA SYNTHETASE BETA CHAIN"/>
    <property type="match status" value="1"/>
</dbReference>
<dbReference type="Pfam" id="PF08442">
    <property type="entry name" value="ATP-grasp_2"/>
    <property type="match status" value="1"/>
</dbReference>
<dbReference type="Pfam" id="PF00549">
    <property type="entry name" value="Ligase_CoA"/>
    <property type="match status" value="1"/>
</dbReference>
<dbReference type="PIRSF" id="PIRSF001554">
    <property type="entry name" value="SucCS_beta"/>
    <property type="match status" value="1"/>
</dbReference>
<dbReference type="SUPFAM" id="SSF56059">
    <property type="entry name" value="Glutathione synthetase ATP-binding domain-like"/>
    <property type="match status" value="1"/>
</dbReference>
<dbReference type="SUPFAM" id="SSF52210">
    <property type="entry name" value="Succinyl-CoA synthetase domains"/>
    <property type="match status" value="1"/>
</dbReference>
<dbReference type="PROSITE" id="PS50975">
    <property type="entry name" value="ATP_GRASP"/>
    <property type="match status" value="1"/>
</dbReference>
<dbReference type="PROSITE" id="PS01217">
    <property type="entry name" value="SUCCINYL_COA_LIG_3"/>
    <property type="match status" value="1"/>
</dbReference>
<evidence type="ECO:0000255" key="1">
    <source>
        <dbReference type="HAMAP-Rule" id="MF_00558"/>
    </source>
</evidence>
<sequence>MNIHEYQGKEILRKYNVPVPRGIPAFSVDEALKAAETLGGPVWVVKAQIHAGGRGKGGGVKVAKSIDDVKTYASNILGMQLVTHQTGPEGKKVNRLLIEEGADIKKELYVSLVVDRVSQKVALMASSEGGMDIEEVAAHSPEKIHTLIIEPSVGLTDAEADDIARKIGVPDTSVAQARQALQGLYKAFYETDASLAEINPLILTGDGKVIALDAKFNFDSNALFRHPEIVAYRDLDEEDANEIEASKFDLAYISLDGNIGCLVNGAGLAMATMDTIKLFGGEPANFLDVGGGATTEKVTEAFKLMLSNKNVQAILVNIFGGIMRCDVIAEGVISASKAVHLTVPLVVRMKGTNEDLGKKMLADSGLPIISADTMEEAAQKVVAAAAGK</sequence>
<feature type="chain" id="PRO_1000082183" description="Succinate--CoA ligase [ADP-forming] subunit beta">
    <location>
        <begin position="1"/>
        <end position="388"/>
    </location>
</feature>
<feature type="domain" description="ATP-grasp" evidence="1">
    <location>
        <begin position="9"/>
        <end position="244"/>
    </location>
</feature>
<feature type="binding site" evidence="1">
    <location>
        <position position="46"/>
    </location>
    <ligand>
        <name>ATP</name>
        <dbReference type="ChEBI" id="CHEBI:30616"/>
    </ligand>
</feature>
<feature type="binding site" evidence="1">
    <location>
        <begin position="53"/>
        <end position="55"/>
    </location>
    <ligand>
        <name>ATP</name>
        <dbReference type="ChEBI" id="CHEBI:30616"/>
    </ligand>
</feature>
<feature type="binding site" evidence="1">
    <location>
        <position position="99"/>
    </location>
    <ligand>
        <name>ATP</name>
        <dbReference type="ChEBI" id="CHEBI:30616"/>
    </ligand>
</feature>
<feature type="binding site" evidence="1">
    <location>
        <position position="102"/>
    </location>
    <ligand>
        <name>ATP</name>
        <dbReference type="ChEBI" id="CHEBI:30616"/>
    </ligand>
</feature>
<feature type="binding site" evidence="1">
    <location>
        <position position="107"/>
    </location>
    <ligand>
        <name>ATP</name>
        <dbReference type="ChEBI" id="CHEBI:30616"/>
    </ligand>
</feature>
<feature type="binding site" evidence="1">
    <location>
        <position position="199"/>
    </location>
    <ligand>
        <name>Mg(2+)</name>
        <dbReference type="ChEBI" id="CHEBI:18420"/>
    </ligand>
</feature>
<feature type="binding site" evidence="1">
    <location>
        <position position="213"/>
    </location>
    <ligand>
        <name>Mg(2+)</name>
        <dbReference type="ChEBI" id="CHEBI:18420"/>
    </ligand>
</feature>
<feature type="binding site" evidence="1">
    <location>
        <position position="264"/>
    </location>
    <ligand>
        <name>substrate</name>
        <note>ligand shared with subunit alpha</note>
    </ligand>
</feature>
<feature type="binding site" evidence="1">
    <location>
        <begin position="321"/>
        <end position="323"/>
    </location>
    <ligand>
        <name>substrate</name>
        <note>ligand shared with subunit alpha</note>
    </ligand>
</feature>
<keyword id="KW-0067">ATP-binding</keyword>
<keyword id="KW-0436">Ligase</keyword>
<keyword id="KW-0460">Magnesium</keyword>
<keyword id="KW-0479">Metal-binding</keyword>
<keyword id="KW-0547">Nucleotide-binding</keyword>
<keyword id="KW-1185">Reference proteome</keyword>
<keyword id="KW-0816">Tricarboxylic acid cycle</keyword>
<proteinExistence type="inferred from homology"/>
<organism>
    <name type="scientific">Cupriavidus necator (strain ATCC 17699 / DSM 428 / KCTC 22496 / NCIMB 10442 / H16 / Stanier 337)</name>
    <name type="common">Ralstonia eutropha</name>
    <dbReference type="NCBI Taxonomy" id="381666"/>
    <lineage>
        <taxon>Bacteria</taxon>
        <taxon>Pseudomonadati</taxon>
        <taxon>Pseudomonadota</taxon>
        <taxon>Betaproteobacteria</taxon>
        <taxon>Burkholderiales</taxon>
        <taxon>Burkholderiaceae</taxon>
        <taxon>Cupriavidus</taxon>
    </lineage>
</organism>
<protein>
    <recommendedName>
        <fullName evidence="1">Succinate--CoA ligase [ADP-forming] subunit beta</fullName>
        <ecNumber evidence="1">6.2.1.5</ecNumber>
    </recommendedName>
    <alternativeName>
        <fullName evidence="1">Succinyl-CoA synthetase subunit beta</fullName>
        <shortName evidence="1">SCS-beta</shortName>
    </alternativeName>
</protein>